<sequence>MRDPPAPLFRRDNMLEFYFSYRGVLKRLRSGALGGEMDRLAEHFLTLGYKRASAKIYLSRVARFSQFAATRCGLMPIHQDVIDSYLGTFTTDTPRIGAVSALAHARRVAPERFIIPVPSEEADPDALLLASFSDYLRTVRGLEPKTREGILLGGRRFLDWFRHRHPGQNLEALTAEHVLAAVEHRLSLSATSGTRTAATSHIRTFLRFLCWAGHHRQDLARIVPRTPYWRLAHLPPRLAWGDVRRAIDAIGATTPVAIRDRAVLLLLATTGIRNGELRAIRLQDIDWRTGEVFIRRTKGKRDRVVPLLEETGAALVDYILRARPKVDSPYLFLSFTPPVGAFKSAAPVSRIVRKRLRHGGVELGRVAGAHLLRHSLATQLVGQRRPINEVADLLGHRSINTTALYVKVAASQLAEVALPFPGGAA</sequence>
<feature type="chain" id="PRO_0000197582" description="Putative integrase/recombinase y4rF">
    <location>
        <begin position="1"/>
        <end position="425"/>
    </location>
</feature>
<feature type="domain" description="Core-binding (CB)" evidence="2">
    <location>
        <begin position="123"/>
        <end position="210"/>
    </location>
</feature>
<feature type="domain" description="Tyr recombinase" evidence="1">
    <location>
        <begin position="233"/>
        <end position="418"/>
    </location>
</feature>
<feature type="active site" evidence="1">
    <location>
        <position position="273"/>
    </location>
</feature>
<feature type="active site" evidence="1">
    <location>
        <position position="298"/>
    </location>
</feature>
<feature type="active site" evidence="1">
    <location>
        <position position="370"/>
    </location>
</feature>
<feature type="active site" evidence="1">
    <location>
        <position position="373"/>
    </location>
</feature>
<feature type="active site" evidence="1">
    <location>
        <position position="396"/>
    </location>
</feature>
<feature type="active site" description="O-(3'-phospho-DNA)-tyrosine intermediate" evidence="1">
    <location>
        <position position="405"/>
    </location>
</feature>
<geneLocation type="plasmid">
    <name>sym pNGR234a</name>
</geneLocation>
<accession>P55639</accession>
<reference key="1">
    <citation type="journal article" date="1997" name="Nature">
        <title>Molecular basis of symbiosis between Rhizobium and legumes.</title>
        <authorList>
            <person name="Freiberg C.A."/>
            <person name="Fellay R."/>
            <person name="Bairoch A."/>
            <person name="Broughton W.J."/>
            <person name="Rosenthal A."/>
            <person name="Perret X."/>
        </authorList>
    </citation>
    <scope>NUCLEOTIDE SEQUENCE [LARGE SCALE GENOMIC DNA]</scope>
    <source>
        <strain>NBRC 101917 / NGR234</strain>
    </source>
</reference>
<reference key="2">
    <citation type="journal article" date="2009" name="Appl. Environ. Microbiol.">
        <title>Rhizobium sp. strain NGR234 possesses a remarkable number of secretion systems.</title>
        <authorList>
            <person name="Schmeisser C."/>
            <person name="Liesegang H."/>
            <person name="Krysciak D."/>
            <person name="Bakkou N."/>
            <person name="Le Quere A."/>
            <person name="Wollherr A."/>
            <person name="Heinemeyer I."/>
            <person name="Morgenstern B."/>
            <person name="Pommerening-Roeser A."/>
            <person name="Flores M."/>
            <person name="Palacios R."/>
            <person name="Brenner S."/>
            <person name="Gottschalk G."/>
            <person name="Schmitz R.A."/>
            <person name="Broughton W.J."/>
            <person name="Perret X."/>
            <person name="Strittmatter A.W."/>
            <person name="Streit W.R."/>
        </authorList>
    </citation>
    <scope>NUCLEOTIDE SEQUENCE [LARGE SCALE GENOMIC DNA]</scope>
    <source>
        <strain>NBRC 101917 / NGR234</strain>
    </source>
</reference>
<organism>
    <name type="scientific">Sinorhizobium fredii (strain NBRC 101917 / NGR234)</name>
    <dbReference type="NCBI Taxonomy" id="394"/>
    <lineage>
        <taxon>Bacteria</taxon>
        <taxon>Pseudomonadati</taxon>
        <taxon>Pseudomonadota</taxon>
        <taxon>Alphaproteobacteria</taxon>
        <taxon>Hyphomicrobiales</taxon>
        <taxon>Rhizobiaceae</taxon>
        <taxon>Sinorhizobium/Ensifer group</taxon>
        <taxon>Sinorhizobium</taxon>
    </lineage>
</organism>
<protein>
    <recommendedName>
        <fullName>Putative integrase/recombinase y4rF</fullName>
    </recommendedName>
</protein>
<keyword id="KW-0229">DNA integration</keyword>
<keyword id="KW-0233">DNA recombination</keyword>
<keyword id="KW-0238">DNA-binding</keyword>
<keyword id="KW-0614">Plasmid</keyword>
<keyword id="KW-1185">Reference proteome</keyword>
<keyword id="KW-0814">Transposable element</keyword>
<keyword id="KW-1179">Viral genome integration</keyword>
<keyword id="KW-1160">Virus entry into host cell</keyword>
<evidence type="ECO:0000255" key="1">
    <source>
        <dbReference type="PROSITE-ProRule" id="PRU01246"/>
    </source>
</evidence>
<evidence type="ECO:0000255" key="2">
    <source>
        <dbReference type="PROSITE-ProRule" id="PRU01248"/>
    </source>
</evidence>
<evidence type="ECO:0000305" key="3"/>
<comment type="similarity">
    <text evidence="3">Belongs to the 'phage' integrase family.</text>
</comment>
<name>Y4RF_SINFN</name>
<dbReference type="EMBL" id="U00090">
    <property type="protein sequence ID" value="AAB92472.1"/>
    <property type="molecule type" value="Genomic_DNA"/>
</dbReference>
<dbReference type="RefSeq" id="NP_444044.1">
    <property type="nucleotide sequence ID" value="NC_000914.2"/>
</dbReference>
<dbReference type="SMR" id="P55639"/>
<dbReference type="KEGG" id="rhi:NGR_a01810"/>
<dbReference type="PATRIC" id="fig|394.7.peg.179"/>
<dbReference type="eggNOG" id="COG0582">
    <property type="taxonomic scope" value="Bacteria"/>
</dbReference>
<dbReference type="HOGENOM" id="CLU_027562_23_3_5"/>
<dbReference type="OrthoDB" id="67979at2"/>
<dbReference type="Proteomes" id="UP000001054">
    <property type="component" value="Plasmid pNGR234a"/>
</dbReference>
<dbReference type="GO" id="GO:0003677">
    <property type="term" value="F:DNA binding"/>
    <property type="evidence" value="ECO:0007669"/>
    <property type="project" value="UniProtKB-KW"/>
</dbReference>
<dbReference type="GO" id="GO:0015074">
    <property type="term" value="P:DNA integration"/>
    <property type="evidence" value="ECO:0007669"/>
    <property type="project" value="UniProtKB-KW"/>
</dbReference>
<dbReference type="GO" id="GO:0006310">
    <property type="term" value="P:DNA recombination"/>
    <property type="evidence" value="ECO:0007669"/>
    <property type="project" value="UniProtKB-KW"/>
</dbReference>
<dbReference type="GO" id="GO:0075713">
    <property type="term" value="P:establishment of integrated proviral latency"/>
    <property type="evidence" value="ECO:0007669"/>
    <property type="project" value="UniProtKB-KW"/>
</dbReference>
<dbReference type="GO" id="GO:0046718">
    <property type="term" value="P:symbiont entry into host cell"/>
    <property type="evidence" value="ECO:0007669"/>
    <property type="project" value="UniProtKB-KW"/>
</dbReference>
<dbReference type="GO" id="GO:0044826">
    <property type="term" value="P:viral genome integration into host DNA"/>
    <property type="evidence" value="ECO:0007669"/>
    <property type="project" value="UniProtKB-KW"/>
</dbReference>
<dbReference type="CDD" id="cd01188">
    <property type="entry name" value="INT_RitA_C_like"/>
    <property type="match status" value="1"/>
</dbReference>
<dbReference type="Gene3D" id="1.10.150.130">
    <property type="match status" value="1"/>
</dbReference>
<dbReference type="Gene3D" id="1.10.443.10">
    <property type="entry name" value="Intergrase catalytic core"/>
    <property type="match status" value="1"/>
</dbReference>
<dbReference type="InterPro" id="IPR044068">
    <property type="entry name" value="CB"/>
</dbReference>
<dbReference type="InterPro" id="IPR011010">
    <property type="entry name" value="DNA_brk_join_enz"/>
</dbReference>
<dbReference type="InterPro" id="IPR013762">
    <property type="entry name" value="Integrase-like_cat_sf"/>
</dbReference>
<dbReference type="InterPro" id="IPR002104">
    <property type="entry name" value="Integrase_catalytic"/>
</dbReference>
<dbReference type="InterPro" id="IPR010998">
    <property type="entry name" value="Integrase_recombinase_N"/>
</dbReference>
<dbReference type="InterPro" id="IPR050090">
    <property type="entry name" value="Tyrosine_recombinase_XerCD"/>
</dbReference>
<dbReference type="PANTHER" id="PTHR30349">
    <property type="entry name" value="PHAGE INTEGRASE-RELATED"/>
    <property type="match status" value="1"/>
</dbReference>
<dbReference type="PANTHER" id="PTHR30349:SF90">
    <property type="entry name" value="TYROSINE RECOMBINASE XERD"/>
    <property type="match status" value="1"/>
</dbReference>
<dbReference type="Pfam" id="PF00589">
    <property type="entry name" value="Phage_integrase"/>
    <property type="match status" value="1"/>
</dbReference>
<dbReference type="SUPFAM" id="SSF56349">
    <property type="entry name" value="DNA breaking-rejoining enzymes"/>
    <property type="match status" value="1"/>
</dbReference>
<dbReference type="PROSITE" id="PS51900">
    <property type="entry name" value="CB"/>
    <property type="match status" value="1"/>
</dbReference>
<dbReference type="PROSITE" id="PS51898">
    <property type="entry name" value="TYR_RECOMBINASE"/>
    <property type="match status" value="1"/>
</dbReference>
<gene>
    <name type="ordered locus">NGR_a01810</name>
    <name type="ORF">y4rF</name>
</gene>
<proteinExistence type="inferred from homology"/>